<proteinExistence type="inferred from homology"/>
<comment type="function">
    <text evidence="1">May be involved in vacuolar sorting and osmoregulation.</text>
</comment>
<comment type="cofactor">
    <cofactor evidence="2">
        <name>Zn(2+)</name>
        <dbReference type="ChEBI" id="CHEBI:29105"/>
    </cofactor>
    <text evidence="2">Binds 2 Zn(2+) ions per subunit.</text>
</comment>
<comment type="subcellular location">
    <subcellularLocation>
        <location evidence="1">Vacuole membrane</location>
        <topology evidence="3">Multi-pass membrane protein</topology>
    </subcellularLocation>
</comment>
<comment type="similarity">
    <text evidence="5">Belongs to the peptidase M28 family.</text>
</comment>
<sequence>MSEEEVHDTSSEASEVFTNQPNAFVRGVRSIFGYRKTSLTLFVILTIVVTAGLSFYDNSLELTIELPTSQLEKEILESSWLDLQNIARYPHTYGSRANDQVHDYLEEIIQDMEYDNDGEKIMFESGKGVVSYYESNNLLVRVNGSDGTLPALLLSAHYDSVPSSFGVTDDGMGVASLLGVLRFVAHNQPRRTIIFNFNNNEEFGLFGAHAFVKHPWFKQVGYFLNLEGTGAGGKAVLFRGTDYGIVKNFGGVRYPYATSIFQQGFNNHVIHSETDYKVYKEAGLRGLDLAFYKPRDKYHTGEDNIRNVSPKSLWHMMSNAIDFVQMGVVDDSEEPAVYTTFLGYFFATPISALARVNLVLLVLFPVVSTPLLFVIVKYKKWKLRVTNFLGVPLAMGLAVAVGQVGNPMLVSSHPMMVVATTTSIVVLVYYVVLNGVDWVNTSSDQKLVTMIEVSFVYWVVLVYVTWSGGDHTGEFGVTVLFFVQASTSLLGLIGWTFTRVRGGDEPLLSGEEERYGTEDERDTEKPLVEHNYDWSLQYLLIVPVSSLVVYNSGWLVLEGVNKTVQESLASEHLIYWIVVVFSQFLVLPVVPFITKFNRYIVLGLSVVVVVGVLMSMAVHPFNQGSPMKLRFIERVGQNDMVEVYGRQGFVEDVLSDLPSVKQTQAKLECEALPDGLEVCKYKSGLTPGNLTVEVTTEPRAESYGLISGAITIAAPENRMCTVHFPPDRVKAVVVGKFGNNFKAIPDGFSREKGNYIYKDRNGISQLELYKLDWNKDYHVGFEWLPDIDDEGGMRVEVECFWGDMVPAYQEVVHYSPNWVTWANKERGLVGVVKHVDV</sequence>
<name>PFF1_CANAL</name>
<organism>
    <name type="scientific">Candida albicans (strain SC5314 / ATCC MYA-2876)</name>
    <name type="common">Yeast</name>
    <dbReference type="NCBI Taxonomy" id="237561"/>
    <lineage>
        <taxon>Eukaryota</taxon>
        <taxon>Fungi</taxon>
        <taxon>Dikarya</taxon>
        <taxon>Ascomycota</taxon>
        <taxon>Saccharomycotina</taxon>
        <taxon>Pichiomycetes</taxon>
        <taxon>Debaryomycetaceae</taxon>
        <taxon>Candida/Lodderomyces clade</taxon>
        <taxon>Candida</taxon>
    </lineage>
</organism>
<evidence type="ECO:0000250" key="1">
    <source>
        <dbReference type="UniProtKB" id="P38244"/>
    </source>
</evidence>
<evidence type="ECO:0000250" key="2">
    <source>
        <dbReference type="UniProtKB" id="P80561"/>
    </source>
</evidence>
<evidence type="ECO:0000255" key="3"/>
<evidence type="ECO:0000255" key="4">
    <source>
        <dbReference type="PROSITE-ProRule" id="PRU00498"/>
    </source>
</evidence>
<evidence type="ECO:0000305" key="5"/>
<keyword id="KW-0325">Glycoprotein</keyword>
<keyword id="KW-0378">Hydrolase</keyword>
<keyword id="KW-0472">Membrane</keyword>
<keyword id="KW-0479">Metal-binding</keyword>
<keyword id="KW-0482">Metalloprotease</keyword>
<keyword id="KW-0645">Protease</keyword>
<keyword id="KW-1185">Reference proteome</keyword>
<keyword id="KW-0812">Transmembrane</keyword>
<keyword id="KW-1133">Transmembrane helix</keyword>
<keyword id="KW-0926">Vacuole</keyword>
<keyword id="KW-0862">Zinc</keyword>
<accession>Q59RF7</accession>
<accession>A0A1D8PQH9</accession>
<gene>
    <name type="ordered locus">CAALFM_C604650WA</name>
    <name type="ORF">CaO19.2163</name>
    <name type="ORF">CaO19.9709</name>
</gene>
<protein>
    <recommendedName>
        <fullName evidence="1">Vacuolar membrane protease</fullName>
        <ecNumber evidence="5">3.4.-.-</ecNumber>
    </recommendedName>
    <alternativeName>
        <fullName evidence="1">FXNA-related family protease 1</fullName>
    </alternativeName>
</protein>
<reference key="1">
    <citation type="journal article" date="2004" name="Proc. Natl. Acad. Sci. U.S.A.">
        <title>The diploid genome sequence of Candida albicans.</title>
        <authorList>
            <person name="Jones T."/>
            <person name="Federspiel N.A."/>
            <person name="Chibana H."/>
            <person name="Dungan J."/>
            <person name="Kalman S."/>
            <person name="Magee B.B."/>
            <person name="Newport G."/>
            <person name="Thorstenson Y.R."/>
            <person name="Agabian N."/>
            <person name="Magee P.T."/>
            <person name="Davis R.W."/>
            <person name="Scherer S."/>
        </authorList>
    </citation>
    <scope>NUCLEOTIDE SEQUENCE [LARGE SCALE GENOMIC DNA]</scope>
    <source>
        <strain>SC5314 / ATCC MYA-2876</strain>
    </source>
</reference>
<reference key="2">
    <citation type="journal article" date="2007" name="Genome Biol.">
        <title>Assembly of the Candida albicans genome into sixteen supercontigs aligned on the eight chromosomes.</title>
        <authorList>
            <person name="van het Hoog M."/>
            <person name="Rast T.J."/>
            <person name="Martchenko M."/>
            <person name="Grindle S."/>
            <person name="Dignard D."/>
            <person name="Hogues H."/>
            <person name="Cuomo C."/>
            <person name="Berriman M."/>
            <person name="Scherer S."/>
            <person name="Magee B.B."/>
            <person name="Whiteway M."/>
            <person name="Chibana H."/>
            <person name="Nantel A."/>
            <person name="Magee P.T."/>
        </authorList>
    </citation>
    <scope>GENOME REANNOTATION</scope>
    <source>
        <strain>SC5314 / ATCC MYA-2876</strain>
    </source>
</reference>
<reference key="3">
    <citation type="journal article" date="2013" name="Genome Biol.">
        <title>Assembly of a phased diploid Candida albicans genome facilitates allele-specific measurements and provides a simple model for repeat and indel structure.</title>
        <authorList>
            <person name="Muzzey D."/>
            <person name="Schwartz K."/>
            <person name="Weissman J.S."/>
            <person name="Sherlock G."/>
        </authorList>
    </citation>
    <scope>NUCLEOTIDE SEQUENCE [LARGE SCALE GENOMIC DNA]</scope>
    <scope>GENOME REANNOTATION</scope>
    <source>
        <strain>SC5314 / ATCC MYA-2876</strain>
    </source>
</reference>
<feature type="chain" id="PRO_0000411705" description="Vacuolar membrane protease">
    <location>
        <begin position="1"/>
        <end position="837"/>
    </location>
</feature>
<feature type="topological domain" description="Cytoplasmic" evidence="1">
    <location>
        <begin position="1"/>
        <end position="36"/>
    </location>
</feature>
<feature type="transmembrane region" description="Helical; Name=1" evidence="3">
    <location>
        <begin position="37"/>
        <end position="57"/>
    </location>
</feature>
<feature type="topological domain" description="Vacuolar" evidence="1">
    <location>
        <begin position="58"/>
        <end position="355"/>
    </location>
</feature>
<feature type="transmembrane region" description="Helical; Name=2" evidence="3">
    <location>
        <begin position="356"/>
        <end position="376"/>
    </location>
</feature>
<feature type="topological domain" description="Cytoplasmic" evidence="1">
    <location>
        <begin position="377"/>
        <end position="384"/>
    </location>
</feature>
<feature type="transmembrane region" description="Helical; Name=3" evidence="3">
    <location>
        <begin position="385"/>
        <end position="405"/>
    </location>
</feature>
<feature type="topological domain" description="Vacuolar" evidence="1">
    <location>
        <begin position="406"/>
        <end position="415"/>
    </location>
</feature>
<feature type="transmembrane region" description="Helical; Name=4" evidence="3">
    <location>
        <begin position="416"/>
        <end position="436"/>
    </location>
</feature>
<feature type="topological domain" description="Cytoplasmic" evidence="1">
    <location>
        <begin position="437"/>
        <end position="446"/>
    </location>
</feature>
<feature type="transmembrane region" description="Helical; Name=5" evidence="3">
    <location>
        <begin position="447"/>
        <end position="467"/>
    </location>
</feature>
<feature type="topological domain" description="Vacuolar" evidence="1">
    <location>
        <begin position="468"/>
        <end position="474"/>
    </location>
</feature>
<feature type="transmembrane region" description="Helical; Name=6" evidence="3">
    <location>
        <begin position="475"/>
        <end position="495"/>
    </location>
</feature>
<feature type="topological domain" description="Cytoplasmic" evidence="1">
    <location>
        <begin position="496"/>
        <end position="539"/>
    </location>
</feature>
<feature type="transmembrane region" description="Helical; Name=7" evidence="3">
    <location>
        <begin position="540"/>
        <end position="560"/>
    </location>
</feature>
<feature type="topological domain" description="Vacuolar" evidence="1">
    <location>
        <begin position="561"/>
        <end position="572"/>
    </location>
</feature>
<feature type="transmembrane region" description="Helical; Name=8" evidence="3">
    <location>
        <begin position="573"/>
        <end position="593"/>
    </location>
</feature>
<feature type="topological domain" description="Cytoplasmic" evidence="1">
    <location>
        <begin position="594"/>
        <end position="598"/>
    </location>
</feature>
<feature type="transmembrane region" description="Helical; Name=9" evidence="3">
    <location>
        <begin position="599"/>
        <end position="619"/>
    </location>
</feature>
<feature type="topological domain" description="Vacuolar" evidence="1">
    <location>
        <begin position="620"/>
        <end position="837"/>
    </location>
</feature>
<feature type="active site" description="Proton acceptor" evidence="2">
    <location>
        <position position="201"/>
    </location>
</feature>
<feature type="binding site" evidence="2">
    <location>
        <position position="157"/>
    </location>
    <ligand>
        <name>Zn(2+)</name>
        <dbReference type="ChEBI" id="CHEBI:29105"/>
        <label>1</label>
        <note>catalytic</note>
    </ligand>
</feature>
<feature type="binding site" evidence="2">
    <location>
        <position position="169"/>
    </location>
    <ligand>
        <name>Zn(2+)</name>
        <dbReference type="ChEBI" id="CHEBI:29105"/>
        <label>1</label>
        <note>catalytic</note>
    </ligand>
</feature>
<feature type="binding site" evidence="2">
    <location>
        <position position="169"/>
    </location>
    <ligand>
        <name>Zn(2+)</name>
        <dbReference type="ChEBI" id="CHEBI:29105"/>
        <label>2</label>
        <note>catalytic</note>
    </ligand>
</feature>
<feature type="binding site" evidence="2">
    <location>
        <position position="202"/>
    </location>
    <ligand>
        <name>Zn(2+)</name>
        <dbReference type="ChEBI" id="CHEBI:29105"/>
        <label>2</label>
        <note>catalytic</note>
    </ligand>
</feature>
<feature type="binding site" evidence="2">
    <location>
        <position position="227"/>
    </location>
    <ligand>
        <name>Zn(2+)</name>
        <dbReference type="ChEBI" id="CHEBI:29105"/>
        <label>1</label>
        <note>catalytic</note>
    </ligand>
</feature>
<feature type="binding site" evidence="2">
    <location>
        <position position="299"/>
    </location>
    <ligand>
        <name>Zn(2+)</name>
        <dbReference type="ChEBI" id="CHEBI:29105"/>
        <label>2</label>
        <note>catalytic</note>
    </ligand>
</feature>
<feature type="site" description="Transition state stabilizer" evidence="2">
    <location>
        <position position="298"/>
    </location>
</feature>
<feature type="glycosylation site" description="N-linked (GlcNAc...) asparagine" evidence="4">
    <location>
        <position position="143"/>
    </location>
</feature>
<feature type="glycosylation site" description="N-linked (GlcNAc...) asparagine" evidence="4">
    <location>
        <position position="561"/>
    </location>
</feature>
<feature type="glycosylation site" description="N-linked (GlcNAc...) asparagine" evidence="4">
    <location>
        <position position="689"/>
    </location>
</feature>
<dbReference type="EC" id="3.4.-.-" evidence="5"/>
<dbReference type="EMBL" id="CP017628">
    <property type="protein sequence ID" value="AOW30379.1"/>
    <property type="molecule type" value="Genomic_DNA"/>
</dbReference>
<dbReference type="RefSeq" id="XP_712436.1">
    <property type="nucleotide sequence ID" value="XM_707343.1"/>
</dbReference>
<dbReference type="SMR" id="Q59RF7"/>
<dbReference type="FunCoup" id="Q59RF7">
    <property type="interactions" value="13"/>
</dbReference>
<dbReference type="EnsemblFungi" id="C6_04650W_A-T">
    <property type="protein sequence ID" value="C6_04650W_A-T-p1"/>
    <property type="gene ID" value="C6_04650W_A"/>
</dbReference>
<dbReference type="GeneID" id="3645979"/>
<dbReference type="KEGG" id="cal:CAALFM_C604650WA"/>
<dbReference type="CGD" id="CAL0000197151">
    <property type="gene designation" value="orf19.9709"/>
</dbReference>
<dbReference type="VEuPathDB" id="FungiDB:C6_04650W_A"/>
<dbReference type="eggNOG" id="KOG2194">
    <property type="taxonomic scope" value="Eukaryota"/>
</dbReference>
<dbReference type="HOGENOM" id="CLU_006412_1_0_1"/>
<dbReference type="InParanoid" id="Q59RF7"/>
<dbReference type="OrthoDB" id="76293at2759"/>
<dbReference type="PRO" id="PR:Q59RF7"/>
<dbReference type="Proteomes" id="UP000000559">
    <property type="component" value="Chromosome 6"/>
</dbReference>
<dbReference type="GO" id="GO:0005774">
    <property type="term" value="C:vacuolar membrane"/>
    <property type="evidence" value="ECO:0007669"/>
    <property type="project" value="UniProtKB-SubCell"/>
</dbReference>
<dbReference type="GO" id="GO:0046872">
    <property type="term" value="F:metal ion binding"/>
    <property type="evidence" value="ECO:0007669"/>
    <property type="project" value="UniProtKB-KW"/>
</dbReference>
<dbReference type="GO" id="GO:0008235">
    <property type="term" value="F:metalloexopeptidase activity"/>
    <property type="evidence" value="ECO:0007669"/>
    <property type="project" value="InterPro"/>
</dbReference>
<dbReference type="GO" id="GO:0006508">
    <property type="term" value="P:proteolysis"/>
    <property type="evidence" value="ECO:0000318"/>
    <property type="project" value="GO_Central"/>
</dbReference>
<dbReference type="CDD" id="cd03875">
    <property type="entry name" value="M28_Fxna_like"/>
    <property type="match status" value="1"/>
</dbReference>
<dbReference type="Gene3D" id="3.40.630.10">
    <property type="entry name" value="Zn peptidases"/>
    <property type="match status" value="1"/>
</dbReference>
<dbReference type="InterPro" id="IPR048024">
    <property type="entry name" value="Fxna-like_M28_dom"/>
</dbReference>
<dbReference type="InterPro" id="IPR045175">
    <property type="entry name" value="M28_fam"/>
</dbReference>
<dbReference type="InterPro" id="IPR007484">
    <property type="entry name" value="Peptidase_M28"/>
</dbReference>
<dbReference type="InterPro" id="IPR053975">
    <property type="entry name" value="PFF1_C"/>
</dbReference>
<dbReference type="InterPro" id="IPR053976">
    <property type="entry name" value="PFF1_TM"/>
</dbReference>
<dbReference type="PANTHER" id="PTHR12147">
    <property type="entry name" value="METALLOPEPTIDASE M28 FAMILY MEMBER"/>
    <property type="match status" value="1"/>
</dbReference>
<dbReference type="PANTHER" id="PTHR12147:SF58">
    <property type="entry name" value="VACUOLAR MEMBRANE PROTEASE"/>
    <property type="match status" value="1"/>
</dbReference>
<dbReference type="Pfam" id="PF04389">
    <property type="entry name" value="Peptidase_M28"/>
    <property type="match status" value="1"/>
</dbReference>
<dbReference type="Pfam" id="PF22250">
    <property type="entry name" value="PFF1_C"/>
    <property type="match status" value="1"/>
</dbReference>
<dbReference type="Pfam" id="PF22251">
    <property type="entry name" value="PFF1_TM"/>
    <property type="match status" value="2"/>
</dbReference>
<dbReference type="SUPFAM" id="SSF53187">
    <property type="entry name" value="Zn-dependent exopeptidases"/>
    <property type="match status" value="1"/>
</dbReference>